<accession>P63241</accession>
<accession>A8K9A0</accession>
<accession>D3DTP2</accession>
<accession>P10159</accession>
<accession>Q16182</accession>
<accession>Q7L7L3</accession>
<accession>Q7Z4L1</accession>
<accession>Q9D0G2</accession>
<dbReference type="EMBL" id="M23419">
    <property type="protein sequence ID" value="AAA58453.1"/>
    <property type="molecule type" value="mRNA"/>
</dbReference>
<dbReference type="EMBL" id="S72024">
    <property type="protein sequence ID" value="AAD14095.1"/>
    <property type="molecule type" value="Genomic_DNA"/>
</dbReference>
<dbReference type="EMBL" id="U17969">
    <property type="protein sequence ID" value="AAA86989.1"/>
    <property type="molecule type" value="Genomic_DNA"/>
</dbReference>
<dbReference type="EMBL" id="AY129319">
    <property type="protein sequence ID" value="AAN17514.1"/>
    <property type="molecule type" value="mRNA"/>
</dbReference>
<dbReference type="EMBL" id="AY129320">
    <property type="protein sequence ID" value="AAN17515.1"/>
    <property type="molecule type" value="mRNA"/>
</dbReference>
<dbReference type="EMBL" id="AY129321">
    <property type="protein sequence ID" value="AAN17516.1"/>
    <property type="molecule type" value="mRNA"/>
</dbReference>
<dbReference type="EMBL" id="AY129322">
    <property type="protein sequence ID" value="AAN17518.1"/>
    <property type="molecule type" value="mRNA"/>
</dbReference>
<dbReference type="EMBL" id="AK292615">
    <property type="protein sequence ID" value="BAF85304.1"/>
    <property type="molecule type" value="mRNA"/>
</dbReference>
<dbReference type="EMBL" id="CH471108">
    <property type="protein sequence ID" value="EAW90219.1"/>
    <property type="molecule type" value="Genomic_DNA"/>
</dbReference>
<dbReference type="EMBL" id="CH471108">
    <property type="protein sequence ID" value="EAW90220.1"/>
    <property type="molecule type" value="Genomic_DNA"/>
</dbReference>
<dbReference type="EMBL" id="CH471108">
    <property type="protein sequence ID" value="EAW90221.1"/>
    <property type="molecule type" value="Genomic_DNA"/>
</dbReference>
<dbReference type="EMBL" id="CH471108">
    <property type="protein sequence ID" value="EAW90222.1"/>
    <property type="molecule type" value="Genomic_DNA"/>
</dbReference>
<dbReference type="EMBL" id="BC000751">
    <property type="protein sequence ID" value="AAH00751.1"/>
    <property type="molecule type" value="mRNA"/>
</dbReference>
<dbReference type="EMBL" id="BC001832">
    <property type="protein sequence ID" value="AAH01832.1"/>
    <property type="molecule type" value="mRNA"/>
</dbReference>
<dbReference type="EMBL" id="BC030160">
    <property type="protein sequence ID" value="AAH30160.1"/>
    <property type="molecule type" value="mRNA"/>
</dbReference>
<dbReference type="EMBL" id="BC080196">
    <property type="protein sequence ID" value="AAH80196.1"/>
    <property type="molecule type" value="mRNA"/>
</dbReference>
<dbReference type="EMBL" id="BC085015">
    <property type="protein sequence ID" value="AAH85015.1"/>
    <property type="molecule type" value="mRNA"/>
</dbReference>
<dbReference type="EMBL" id="BC107779">
    <property type="protein sequence ID" value="AAI07780.1"/>
    <property type="molecule type" value="mRNA"/>
</dbReference>
<dbReference type="CCDS" id="CCDS11099.1">
    <molecule id="P63241-1"/>
</dbReference>
<dbReference type="CCDS" id="CCDS45601.1">
    <molecule id="P63241-2"/>
</dbReference>
<dbReference type="PIR" id="B31486">
    <property type="entry name" value="FIHUA"/>
</dbReference>
<dbReference type="RefSeq" id="NP_001137232.1">
    <molecule id="P63241-2"/>
    <property type="nucleotide sequence ID" value="NM_001143760.1"/>
</dbReference>
<dbReference type="RefSeq" id="NP_001137233.1">
    <molecule id="P63241-1"/>
    <property type="nucleotide sequence ID" value="NM_001143761.1"/>
</dbReference>
<dbReference type="RefSeq" id="NP_001137234.1">
    <molecule id="P63241-1"/>
    <property type="nucleotide sequence ID" value="NM_001143762.2"/>
</dbReference>
<dbReference type="RefSeq" id="NP_001357349.1">
    <molecule id="P63241-1"/>
    <property type="nucleotide sequence ID" value="NM_001370420.1"/>
</dbReference>
<dbReference type="RefSeq" id="NP_001357350.1">
    <molecule id="P63241-1"/>
    <property type="nucleotide sequence ID" value="NM_001370421.1"/>
</dbReference>
<dbReference type="RefSeq" id="NP_001961.1">
    <molecule id="P63241-1"/>
    <property type="nucleotide sequence ID" value="NM_001970.5"/>
</dbReference>
<dbReference type="RefSeq" id="XP_005256566.1">
    <property type="nucleotide sequence ID" value="XM_005256509.2"/>
</dbReference>
<dbReference type="RefSeq" id="XP_047291480.1">
    <molecule id="P63241-1"/>
    <property type="nucleotide sequence ID" value="XM_047435524.1"/>
</dbReference>
<dbReference type="PDB" id="3CPF">
    <property type="method" value="X-ray"/>
    <property type="resolution" value="2.50 A"/>
    <property type="chains" value="A/B=15-151"/>
</dbReference>
<dbReference type="PDB" id="5DLQ">
    <property type="method" value="X-ray"/>
    <property type="resolution" value="3.20 A"/>
    <property type="chains" value="E/F=15-154"/>
</dbReference>
<dbReference type="PDB" id="8A0E">
    <property type="method" value="EM"/>
    <property type="resolution" value="2.80 A"/>
    <property type="chains" value="E=1-154"/>
</dbReference>
<dbReference type="PDB" id="8Y0W">
    <property type="method" value="EM"/>
    <property type="resolution" value="3.40 A"/>
    <property type="chains" value="5=1-154"/>
</dbReference>
<dbReference type="PDBsum" id="3CPF"/>
<dbReference type="PDBsum" id="5DLQ"/>
<dbReference type="PDBsum" id="8A0E"/>
<dbReference type="PDBsum" id="8Y0W"/>
<dbReference type="BMRB" id="P63241"/>
<dbReference type="EMDB" id="EMD-29757"/>
<dbReference type="EMDB" id="EMD-29758"/>
<dbReference type="EMDB" id="EMD-29760"/>
<dbReference type="SMR" id="P63241"/>
<dbReference type="BioGRID" id="108299">
    <property type="interactions" value="261"/>
</dbReference>
<dbReference type="FunCoup" id="P63241">
    <property type="interactions" value="2549"/>
</dbReference>
<dbReference type="IntAct" id="P63241">
    <property type="interactions" value="83"/>
</dbReference>
<dbReference type="MINT" id="P63241"/>
<dbReference type="STRING" id="9606.ENSP00000336702"/>
<dbReference type="ChEMBL" id="CHEMBL4105862"/>
<dbReference type="TCDB" id="1.I.1.1.3">
    <property type="family name" value="the nuclear pore complex (npc) family"/>
</dbReference>
<dbReference type="GlyCosmos" id="P63241">
    <property type="glycosylation" value="1 site, 1 glycan"/>
</dbReference>
<dbReference type="GlyGen" id="P63241">
    <property type="glycosylation" value="1 site, 1 O-linked glycan (1 site)"/>
</dbReference>
<dbReference type="iPTMnet" id="P63241"/>
<dbReference type="MetOSite" id="P63241"/>
<dbReference type="PhosphoSitePlus" id="P63241"/>
<dbReference type="SwissPalm" id="P63241"/>
<dbReference type="BioMuta" id="EIF5A"/>
<dbReference type="DMDM" id="54037409"/>
<dbReference type="OGP" id="P63241"/>
<dbReference type="jPOST" id="P63241"/>
<dbReference type="MassIVE" id="P63241"/>
<dbReference type="PaxDb" id="9606-ENSP00000336702"/>
<dbReference type="PeptideAtlas" id="P63241"/>
<dbReference type="PRIDE" id="P63241"/>
<dbReference type="ProteomicsDB" id="57510">
    <molecule id="P63241-1"/>
</dbReference>
<dbReference type="ProteomicsDB" id="57511">
    <molecule id="P63241-2"/>
</dbReference>
<dbReference type="Pumba" id="P63241"/>
<dbReference type="TopDownProteomics" id="P63241-1">
    <molecule id="P63241-1"/>
</dbReference>
<dbReference type="TopDownProteomics" id="P63241-2">
    <molecule id="P63241-2"/>
</dbReference>
<dbReference type="Antibodypedia" id="24021">
    <property type="antibodies" value="347 antibodies from 38 providers"/>
</dbReference>
<dbReference type="DNASU" id="1984"/>
<dbReference type="Ensembl" id="ENST00000336452.11">
    <molecule id="P63241-2"/>
    <property type="protein sequence ID" value="ENSP00000336702.7"/>
    <property type="gene ID" value="ENSG00000132507.18"/>
</dbReference>
<dbReference type="Ensembl" id="ENST00000336458.13">
    <molecule id="P63241-1"/>
    <property type="protein sequence ID" value="ENSP00000336776.8"/>
    <property type="gene ID" value="ENSG00000132507.18"/>
</dbReference>
<dbReference type="Ensembl" id="ENST00000416016.2">
    <molecule id="P63241-1"/>
    <property type="protein sequence ID" value="ENSP00000396073.2"/>
    <property type="gene ID" value="ENSG00000132507.18"/>
</dbReference>
<dbReference type="Ensembl" id="ENST00000419711.6">
    <molecule id="P63241-1"/>
    <property type="protein sequence ID" value="ENSP00000390677.2"/>
    <property type="gene ID" value="ENSG00000132507.18"/>
</dbReference>
<dbReference type="Ensembl" id="ENST00000571955.5">
    <molecule id="P63241-1"/>
    <property type="protein sequence ID" value="ENSP00000458269.1"/>
    <property type="gene ID" value="ENSG00000132507.18"/>
</dbReference>
<dbReference type="Ensembl" id="ENST00000573542.5">
    <molecule id="P63241-1"/>
    <property type="protein sequence ID" value="ENSP00000459611.1"/>
    <property type="gene ID" value="ENSG00000132507.18"/>
</dbReference>
<dbReference type="Ensembl" id="ENST00000576930.5">
    <molecule id="P63241-1"/>
    <property type="protein sequence ID" value="ENSP00000459196.1"/>
    <property type="gene ID" value="ENSG00000132507.18"/>
</dbReference>
<dbReference type="Ensembl" id="ENST00000672250.1">
    <molecule id="P63241-1"/>
    <property type="protein sequence ID" value="ENSP00000500717.1"/>
    <property type="gene ID" value="ENSG00000288145.1"/>
</dbReference>
<dbReference type="Ensembl" id="ENST00000672755.1">
    <molecule id="P63241-1"/>
    <property type="protein sequence ID" value="ENSP00000500847.1"/>
    <property type="gene ID" value="ENSG00000288145.1"/>
</dbReference>
<dbReference type="Ensembl" id="ENST00000672765.1">
    <molecule id="P63241-2"/>
    <property type="protein sequence ID" value="ENSP00000500669.1"/>
    <property type="gene ID" value="ENSG00000288145.1"/>
</dbReference>
<dbReference type="Ensembl" id="ENST00000673099.1">
    <molecule id="P63241-1"/>
    <property type="protein sequence ID" value="ENSP00000499855.1"/>
    <property type="gene ID" value="ENSG00000288145.1"/>
</dbReference>
<dbReference type="Ensembl" id="ENST00000673210.1">
    <molecule id="P63241-1"/>
    <property type="protein sequence ID" value="ENSP00000500414.1"/>
    <property type="gene ID" value="ENSG00000288145.1"/>
</dbReference>
<dbReference type="Ensembl" id="ENST00000673259.1">
    <molecule id="P63241-1"/>
    <property type="protein sequence ID" value="ENSP00000500624.1"/>
    <property type="gene ID" value="ENSG00000288145.1"/>
</dbReference>
<dbReference type="Ensembl" id="ENST00000673304.1">
    <molecule id="P63241-1"/>
    <property type="protein sequence ID" value="ENSP00000499995.1"/>
    <property type="gene ID" value="ENSG00000288145.1"/>
</dbReference>
<dbReference type="GeneID" id="1984"/>
<dbReference type="KEGG" id="hsa:1984"/>
<dbReference type="MANE-Select" id="ENST00000336458.13">
    <property type="protein sequence ID" value="ENSP00000336776.8"/>
    <property type="RefSeq nucleotide sequence ID" value="NM_001970.5"/>
    <property type="RefSeq protein sequence ID" value="NP_001961.1"/>
</dbReference>
<dbReference type="UCSC" id="uc002gfr.3">
    <molecule id="P63241-1"/>
    <property type="organism name" value="human"/>
</dbReference>
<dbReference type="AGR" id="HGNC:3300"/>
<dbReference type="CTD" id="1984"/>
<dbReference type="DisGeNET" id="1984"/>
<dbReference type="GeneCards" id="EIF5A"/>
<dbReference type="HGNC" id="HGNC:3300">
    <property type="gene designation" value="EIF5A"/>
</dbReference>
<dbReference type="HPA" id="ENSG00000132507">
    <property type="expression patterns" value="Low tissue specificity"/>
</dbReference>
<dbReference type="MalaCards" id="EIF5A"/>
<dbReference type="MIM" id="600187">
    <property type="type" value="gene"/>
</dbReference>
<dbReference type="MIM" id="619376">
    <property type="type" value="phenotype"/>
</dbReference>
<dbReference type="neXtProt" id="NX_P63241"/>
<dbReference type="OpenTargets" id="ENSG00000132507"/>
<dbReference type="Orphanet" id="528084">
    <property type="disease" value="Non-specific syndromic intellectual disability"/>
</dbReference>
<dbReference type="PharmGKB" id="PA27726"/>
<dbReference type="VEuPathDB" id="HostDB:ENSG00000132507"/>
<dbReference type="eggNOG" id="KOG3271">
    <property type="taxonomic scope" value="Eukaryota"/>
</dbReference>
<dbReference type="GeneTree" id="ENSGT00390000003738"/>
<dbReference type="InParanoid" id="P63241"/>
<dbReference type="OMA" id="KDDVRMP"/>
<dbReference type="OrthoDB" id="9975114at2759"/>
<dbReference type="PAN-GO" id="P63241">
    <property type="GO annotations" value="2 GO annotations based on evolutionary models"/>
</dbReference>
<dbReference type="PhylomeDB" id="P63241"/>
<dbReference type="TreeFam" id="TF101534"/>
<dbReference type="PathwayCommons" id="P63241"/>
<dbReference type="Reactome" id="R-HSA-204626">
    <property type="pathway name" value="Hypusine synthesis from eIF5A-lysine"/>
</dbReference>
<dbReference type="SignaLink" id="P63241"/>
<dbReference type="SIGNOR" id="P63241"/>
<dbReference type="BioGRID-ORCS" id="1984">
    <property type="hits" value="708 hits in 1138 CRISPR screens"/>
</dbReference>
<dbReference type="CD-CODE" id="DEE660B4">
    <property type="entry name" value="Stress granule"/>
</dbReference>
<dbReference type="ChiTaRS" id="EIF5A">
    <property type="organism name" value="human"/>
</dbReference>
<dbReference type="EvolutionaryTrace" id="P63241"/>
<dbReference type="GeneWiki" id="EIF5A"/>
<dbReference type="GenomeRNAi" id="1984"/>
<dbReference type="Pharos" id="P63241">
    <property type="development level" value="Tbio"/>
</dbReference>
<dbReference type="PRO" id="PR:P63241"/>
<dbReference type="Proteomes" id="UP000005640">
    <property type="component" value="Chromosome 17"/>
</dbReference>
<dbReference type="RNAct" id="P63241">
    <property type="molecule type" value="protein"/>
</dbReference>
<dbReference type="Bgee" id="ENSG00000132507">
    <property type="expression patterns" value="Expressed in lower esophagus mucosa and 98 other cell types or tissues"/>
</dbReference>
<dbReference type="ExpressionAtlas" id="P63241">
    <property type="expression patterns" value="baseline and differential"/>
</dbReference>
<dbReference type="GO" id="GO:0005642">
    <property type="term" value="C:annulate lamellae"/>
    <property type="evidence" value="ECO:0000314"/>
    <property type="project" value="UniProtKB"/>
</dbReference>
<dbReference type="GO" id="GO:0005737">
    <property type="term" value="C:cytoplasm"/>
    <property type="evidence" value="ECO:0000314"/>
    <property type="project" value="UniProtKB"/>
</dbReference>
<dbReference type="GO" id="GO:0005829">
    <property type="term" value="C:cytosol"/>
    <property type="evidence" value="ECO:0000304"/>
    <property type="project" value="Reactome"/>
</dbReference>
<dbReference type="GO" id="GO:0005789">
    <property type="term" value="C:endoplasmic reticulum membrane"/>
    <property type="evidence" value="ECO:0007669"/>
    <property type="project" value="UniProtKB-SubCell"/>
</dbReference>
<dbReference type="GO" id="GO:0016020">
    <property type="term" value="C:membrane"/>
    <property type="evidence" value="ECO:0007005"/>
    <property type="project" value="UniProtKB"/>
</dbReference>
<dbReference type="GO" id="GO:0005643">
    <property type="term" value="C:nuclear pore"/>
    <property type="evidence" value="ECO:0000314"/>
    <property type="project" value="UniProtKB"/>
</dbReference>
<dbReference type="GO" id="GO:0005634">
    <property type="term" value="C:nucleus"/>
    <property type="evidence" value="ECO:0000314"/>
    <property type="project" value="UniProtKB"/>
</dbReference>
<dbReference type="GO" id="GO:0045202">
    <property type="term" value="C:synapse"/>
    <property type="evidence" value="ECO:0007669"/>
    <property type="project" value="Ensembl"/>
</dbReference>
<dbReference type="GO" id="GO:0043022">
    <property type="term" value="F:ribosome binding"/>
    <property type="evidence" value="ECO:0007669"/>
    <property type="project" value="InterPro"/>
</dbReference>
<dbReference type="GO" id="GO:0003723">
    <property type="term" value="F:RNA binding"/>
    <property type="evidence" value="ECO:0000314"/>
    <property type="project" value="UniProtKB"/>
</dbReference>
<dbReference type="GO" id="GO:0003746">
    <property type="term" value="F:translation elongation factor activity"/>
    <property type="evidence" value="ECO:0000250"/>
    <property type="project" value="UniProtKB"/>
</dbReference>
<dbReference type="GO" id="GO:0017070">
    <property type="term" value="F:U6 snRNA binding"/>
    <property type="evidence" value="ECO:0000314"/>
    <property type="project" value="UniProtKB"/>
</dbReference>
<dbReference type="GO" id="GO:0098586">
    <property type="term" value="P:cellular response to virus"/>
    <property type="evidence" value="ECO:0000315"/>
    <property type="project" value="UniProtKB"/>
</dbReference>
<dbReference type="GO" id="GO:1902255">
    <property type="term" value="P:positive regulation of intrinsic apoptotic signaling pathway by p53 class mediator"/>
    <property type="evidence" value="ECO:0000314"/>
    <property type="project" value="UniProtKB"/>
</dbReference>
<dbReference type="GO" id="GO:0045944">
    <property type="term" value="P:positive regulation of transcription by RNA polymerase II"/>
    <property type="evidence" value="ECO:0000315"/>
    <property type="project" value="UniProtKB"/>
</dbReference>
<dbReference type="GO" id="GO:0045901">
    <property type="term" value="P:positive regulation of translational elongation"/>
    <property type="evidence" value="ECO:0000250"/>
    <property type="project" value="UniProtKB"/>
</dbReference>
<dbReference type="GO" id="GO:0045905">
    <property type="term" value="P:positive regulation of translational termination"/>
    <property type="evidence" value="ECO:0007669"/>
    <property type="project" value="InterPro"/>
</dbReference>
<dbReference type="GO" id="GO:0006414">
    <property type="term" value="P:translational elongation"/>
    <property type="evidence" value="ECO:0000315"/>
    <property type="project" value="UniProtKB"/>
</dbReference>
<dbReference type="GO" id="GO:0033209">
    <property type="term" value="P:tumor necrosis factor-mediated signaling pathway"/>
    <property type="evidence" value="ECO:0000314"/>
    <property type="project" value="UniProtKB"/>
</dbReference>
<dbReference type="CDD" id="cd04468">
    <property type="entry name" value="S1_eIF5A"/>
    <property type="match status" value="1"/>
</dbReference>
<dbReference type="DisProt" id="DP02594"/>
<dbReference type="FunFam" id="2.30.30.30:FF:000007">
    <property type="entry name" value="Eukaryotic translation initiation factor 5A"/>
    <property type="match status" value="1"/>
</dbReference>
<dbReference type="FunFam" id="2.40.50.140:FF:000034">
    <property type="entry name" value="Eukaryotic translation initiation factor 5A"/>
    <property type="match status" value="1"/>
</dbReference>
<dbReference type="Gene3D" id="2.30.30.30">
    <property type="match status" value="1"/>
</dbReference>
<dbReference type="Gene3D" id="2.40.50.140">
    <property type="entry name" value="Nucleic acid-binding proteins"/>
    <property type="match status" value="1"/>
</dbReference>
<dbReference type="InterPro" id="IPR001884">
    <property type="entry name" value="IF5A-like"/>
</dbReference>
<dbReference type="InterPro" id="IPR048670">
    <property type="entry name" value="IF5A-like_N"/>
</dbReference>
<dbReference type="InterPro" id="IPR012340">
    <property type="entry name" value="NA-bd_OB-fold"/>
</dbReference>
<dbReference type="InterPro" id="IPR014722">
    <property type="entry name" value="Rib_uL2_dom2"/>
</dbReference>
<dbReference type="InterPro" id="IPR019769">
    <property type="entry name" value="Trans_elong_IF5A_hypusine_site"/>
</dbReference>
<dbReference type="InterPro" id="IPR020189">
    <property type="entry name" value="Transl_elong_IF5A_C"/>
</dbReference>
<dbReference type="InterPro" id="IPR008991">
    <property type="entry name" value="Translation_prot_SH3-like_sf"/>
</dbReference>
<dbReference type="NCBIfam" id="TIGR00037">
    <property type="entry name" value="eIF_5A"/>
    <property type="match status" value="1"/>
</dbReference>
<dbReference type="PANTHER" id="PTHR11673">
    <property type="entry name" value="TRANSLATION INITIATION FACTOR 5A FAMILY MEMBER"/>
    <property type="match status" value="1"/>
</dbReference>
<dbReference type="Pfam" id="PF01287">
    <property type="entry name" value="eIF-5a"/>
    <property type="match status" value="1"/>
</dbReference>
<dbReference type="Pfam" id="PF21485">
    <property type="entry name" value="IF5A-like_N"/>
    <property type="match status" value="1"/>
</dbReference>
<dbReference type="PIRSF" id="PIRSF003025">
    <property type="entry name" value="eIF5A"/>
    <property type="match status" value="1"/>
</dbReference>
<dbReference type="SMART" id="SM01376">
    <property type="entry name" value="eIF-5a"/>
    <property type="match status" value="1"/>
</dbReference>
<dbReference type="SUPFAM" id="SSF50249">
    <property type="entry name" value="Nucleic acid-binding proteins"/>
    <property type="match status" value="1"/>
</dbReference>
<dbReference type="SUPFAM" id="SSF50104">
    <property type="entry name" value="Translation proteins SH3-like domain"/>
    <property type="match status" value="1"/>
</dbReference>
<dbReference type="PROSITE" id="PS00302">
    <property type="entry name" value="IF5A_HYPUSINE"/>
    <property type="match status" value="1"/>
</dbReference>
<name>IF5A1_HUMAN</name>
<keyword id="KW-0002">3D-structure</keyword>
<keyword id="KW-0007">Acetylation</keyword>
<keyword id="KW-0025">Alternative splicing</keyword>
<keyword id="KW-0963">Cytoplasm</keyword>
<keyword id="KW-0903">Direct protein sequencing</keyword>
<keyword id="KW-0225">Disease variant</keyword>
<keyword id="KW-0251">Elongation factor</keyword>
<keyword id="KW-0256">Endoplasmic reticulum</keyword>
<keyword id="KW-0385">Hypusine</keyword>
<keyword id="KW-0472">Membrane</keyword>
<keyword id="KW-0539">Nucleus</keyword>
<keyword id="KW-0648">Protein biosynthesis</keyword>
<keyword id="KW-1267">Proteomics identification</keyword>
<keyword id="KW-1185">Reference proteome</keyword>
<keyword id="KW-0694">RNA-binding</keyword>
<gene>
    <name evidence="28" type="primary">EIF5A</name>
</gene>
<reference key="1">
    <citation type="journal article" date="1989" name="J. Biol. Chem.">
        <title>Sequence determination and cDNA cloning of eukaryotic initiation factor 4D, the hypusine-containing protein.</title>
        <authorList>
            <person name="Smit-Mcbride Z."/>
            <person name="Dever T.E."/>
            <person name="Hershey J.W.B."/>
            <person name="Merrick W.C."/>
        </authorList>
    </citation>
    <scope>NUCLEOTIDE SEQUENCE [MRNA] (ISOFORM 1)</scope>
    <scope>HYPUSINE AT LYS-50</scope>
</reference>
<reference key="2">
    <citation type="journal article" date="1993" name="J. Cell Biol.">
        <title>Eukaryotic initiation factor 5A is a cellular target of the human immunodeficiency virus type 1 Rev activation domain mediating trans-activation.</title>
        <authorList>
            <person name="Ruhl M."/>
            <person name="Himmelspach M."/>
            <person name="Bahr G.M."/>
            <person name="Hammerschmid F."/>
            <person name="Jaksche H."/>
            <person name="Wolff B."/>
            <person name="Aschauer H."/>
            <person name="Farrington G.K."/>
            <person name="Probst H."/>
            <person name="Bevec D."/>
            <person name="Hauber J."/>
        </authorList>
    </citation>
    <scope>NUCLEOTIDE SEQUENCE [MRNA]</scope>
    <scope>PROTEIN SEQUENCE OF 21-154</scope>
    <scope>FUNCTION (MICROBIAL INFECTION)</scope>
    <scope>INTERACTION WITH HIV-1 REV</scope>
    <scope>SUBCELLULAR LOCATION</scope>
</reference>
<reference key="3">
    <citation type="journal article" date="1994" name="Gene">
        <title>The genomic structure encoding human initiation factor eIF-5A.</title>
        <authorList>
            <person name="Koettnitz K."/>
            <person name="Kappel B."/>
            <person name="Baumruker T."/>
            <person name="Hauber J."/>
            <person name="Bevec D."/>
        </authorList>
    </citation>
    <scope>NUCLEOTIDE SEQUENCE [GENOMIC DNA]</scope>
    <source>
        <tissue>Placenta</tissue>
    </source>
</reference>
<reference key="4">
    <citation type="journal article" date="1995" name="Gene">
        <title>Identification of a new member of the human eIF-5A gene family.</title>
        <authorList>
            <person name="Koettnitz K."/>
            <person name="Woehl T."/>
            <person name="Kappel B."/>
            <person name="Lottspeich F."/>
            <person name="Hauber J."/>
            <person name="Bevec D."/>
        </authorList>
    </citation>
    <scope>NUCLEOTIDE SEQUENCE [GENOMIC DNA]</scope>
    <source>
        <tissue>Placenta</tissue>
    </source>
</reference>
<reference key="5">
    <citation type="submission" date="2002-07" db="EMBL/GenBank/DDBJ databases">
        <title>Differential expression of eIF5AI-mRNAs.</title>
        <authorList>
            <person name="Johansson H.E."/>
            <person name="Jenkins Z.A."/>
        </authorList>
    </citation>
    <scope>NUCLEOTIDE SEQUENCE [MRNA] (ISOFORMS 1 AND 2)</scope>
</reference>
<reference key="6">
    <citation type="journal article" date="2004" name="Nat. Genet.">
        <title>Complete sequencing and characterization of 21,243 full-length human cDNAs.</title>
        <authorList>
            <person name="Ota T."/>
            <person name="Suzuki Y."/>
            <person name="Nishikawa T."/>
            <person name="Otsuki T."/>
            <person name="Sugiyama T."/>
            <person name="Irie R."/>
            <person name="Wakamatsu A."/>
            <person name="Hayashi K."/>
            <person name="Sato H."/>
            <person name="Nagai K."/>
            <person name="Kimura K."/>
            <person name="Makita H."/>
            <person name="Sekine M."/>
            <person name="Obayashi M."/>
            <person name="Nishi T."/>
            <person name="Shibahara T."/>
            <person name="Tanaka T."/>
            <person name="Ishii S."/>
            <person name="Yamamoto J."/>
            <person name="Saito K."/>
            <person name="Kawai Y."/>
            <person name="Isono Y."/>
            <person name="Nakamura Y."/>
            <person name="Nagahari K."/>
            <person name="Murakami K."/>
            <person name="Yasuda T."/>
            <person name="Iwayanagi T."/>
            <person name="Wagatsuma M."/>
            <person name="Shiratori A."/>
            <person name="Sudo H."/>
            <person name="Hosoiri T."/>
            <person name="Kaku Y."/>
            <person name="Kodaira H."/>
            <person name="Kondo H."/>
            <person name="Sugawara M."/>
            <person name="Takahashi M."/>
            <person name="Kanda K."/>
            <person name="Yokoi T."/>
            <person name="Furuya T."/>
            <person name="Kikkawa E."/>
            <person name="Omura Y."/>
            <person name="Abe K."/>
            <person name="Kamihara K."/>
            <person name="Katsuta N."/>
            <person name="Sato K."/>
            <person name="Tanikawa M."/>
            <person name="Yamazaki M."/>
            <person name="Ninomiya K."/>
            <person name="Ishibashi T."/>
            <person name="Yamashita H."/>
            <person name="Murakawa K."/>
            <person name="Fujimori K."/>
            <person name="Tanai H."/>
            <person name="Kimata M."/>
            <person name="Watanabe M."/>
            <person name="Hiraoka S."/>
            <person name="Chiba Y."/>
            <person name="Ishida S."/>
            <person name="Ono Y."/>
            <person name="Takiguchi S."/>
            <person name="Watanabe S."/>
            <person name="Yosida M."/>
            <person name="Hotuta T."/>
            <person name="Kusano J."/>
            <person name="Kanehori K."/>
            <person name="Takahashi-Fujii A."/>
            <person name="Hara H."/>
            <person name="Tanase T.-O."/>
            <person name="Nomura Y."/>
            <person name="Togiya S."/>
            <person name="Komai F."/>
            <person name="Hara R."/>
            <person name="Takeuchi K."/>
            <person name="Arita M."/>
            <person name="Imose N."/>
            <person name="Musashino K."/>
            <person name="Yuuki H."/>
            <person name="Oshima A."/>
            <person name="Sasaki N."/>
            <person name="Aotsuka S."/>
            <person name="Yoshikawa Y."/>
            <person name="Matsunawa H."/>
            <person name="Ichihara T."/>
            <person name="Shiohata N."/>
            <person name="Sano S."/>
            <person name="Moriya S."/>
            <person name="Momiyama H."/>
            <person name="Satoh N."/>
            <person name="Takami S."/>
            <person name="Terashima Y."/>
            <person name="Suzuki O."/>
            <person name="Nakagawa S."/>
            <person name="Senoh A."/>
            <person name="Mizoguchi H."/>
            <person name="Goto Y."/>
            <person name="Shimizu F."/>
            <person name="Wakebe H."/>
            <person name="Hishigaki H."/>
            <person name="Watanabe T."/>
            <person name="Sugiyama A."/>
            <person name="Takemoto M."/>
            <person name="Kawakami B."/>
            <person name="Yamazaki M."/>
            <person name="Watanabe K."/>
            <person name="Kumagai A."/>
            <person name="Itakura S."/>
            <person name="Fukuzumi Y."/>
            <person name="Fujimori Y."/>
            <person name="Komiyama M."/>
            <person name="Tashiro H."/>
            <person name="Tanigami A."/>
            <person name="Fujiwara T."/>
            <person name="Ono T."/>
            <person name="Yamada K."/>
            <person name="Fujii Y."/>
            <person name="Ozaki K."/>
            <person name="Hirao M."/>
            <person name="Ohmori Y."/>
            <person name="Kawabata A."/>
            <person name="Hikiji T."/>
            <person name="Kobatake N."/>
            <person name="Inagaki H."/>
            <person name="Ikema Y."/>
            <person name="Okamoto S."/>
            <person name="Okitani R."/>
            <person name="Kawakami T."/>
            <person name="Noguchi S."/>
            <person name="Itoh T."/>
            <person name="Shigeta K."/>
            <person name="Senba T."/>
            <person name="Matsumura K."/>
            <person name="Nakajima Y."/>
            <person name="Mizuno T."/>
            <person name="Morinaga M."/>
            <person name="Sasaki M."/>
            <person name="Togashi T."/>
            <person name="Oyama M."/>
            <person name="Hata H."/>
            <person name="Watanabe M."/>
            <person name="Komatsu T."/>
            <person name="Mizushima-Sugano J."/>
            <person name="Satoh T."/>
            <person name="Shirai Y."/>
            <person name="Takahashi Y."/>
            <person name="Nakagawa K."/>
            <person name="Okumura K."/>
            <person name="Nagase T."/>
            <person name="Nomura N."/>
            <person name="Kikuchi H."/>
            <person name="Masuho Y."/>
            <person name="Yamashita R."/>
            <person name="Nakai K."/>
            <person name="Yada T."/>
            <person name="Nakamura Y."/>
            <person name="Ohara O."/>
            <person name="Isogai T."/>
            <person name="Sugano S."/>
        </authorList>
    </citation>
    <scope>NUCLEOTIDE SEQUENCE [LARGE SCALE MRNA] (ISOFORM 1)</scope>
    <source>
        <tissue>Thymus</tissue>
    </source>
</reference>
<reference key="7">
    <citation type="submission" date="2005-09" db="EMBL/GenBank/DDBJ databases">
        <authorList>
            <person name="Mural R.J."/>
            <person name="Istrail S."/>
            <person name="Sutton G.G."/>
            <person name="Florea L."/>
            <person name="Halpern A.L."/>
            <person name="Mobarry C.M."/>
            <person name="Lippert R."/>
            <person name="Walenz B."/>
            <person name="Shatkay H."/>
            <person name="Dew I."/>
            <person name="Miller J.R."/>
            <person name="Flanigan M.J."/>
            <person name="Edwards N.J."/>
            <person name="Bolanos R."/>
            <person name="Fasulo D."/>
            <person name="Halldorsson B.V."/>
            <person name="Hannenhalli S."/>
            <person name="Turner R."/>
            <person name="Yooseph S."/>
            <person name="Lu F."/>
            <person name="Nusskern D.R."/>
            <person name="Shue B.C."/>
            <person name="Zheng X.H."/>
            <person name="Zhong F."/>
            <person name="Delcher A.L."/>
            <person name="Huson D.H."/>
            <person name="Kravitz S.A."/>
            <person name="Mouchard L."/>
            <person name="Reinert K."/>
            <person name="Remington K.A."/>
            <person name="Clark A.G."/>
            <person name="Waterman M.S."/>
            <person name="Eichler E.E."/>
            <person name="Adams M.D."/>
            <person name="Hunkapiller M.W."/>
            <person name="Myers E.W."/>
            <person name="Venter J.C."/>
        </authorList>
    </citation>
    <scope>NUCLEOTIDE SEQUENCE [LARGE SCALE GENOMIC DNA]</scope>
</reference>
<reference key="8">
    <citation type="journal article" date="2004" name="Genome Res.">
        <title>The status, quality, and expansion of the NIH full-length cDNA project: the Mammalian Gene Collection (MGC).</title>
        <authorList>
            <consortium name="The MGC Project Team"/>
        </authorList>
    </citation>
    <scope>NUCLEOTIDE SEQUENCE [LARGE SCALE MRNA] (ISOFORM 1)</scope>
    <source>
        <tissue>Muscle</tissue>
        <tissue>Prostate</tissue>
        <tissue>Uterus</tissue>
    </source>
</reference>
<reference key="9">
    <citation type="journal article" date="1999" name="Biochem. J.">
        <title>Complex formation between deoxyhypusine synthase and its protein substrate, the eukaryotic translation initiation factor 5A (eIF5A) precursor.</title>
        <authorList>
            <person name="Lee Y.B."/>
            <person name="Joe Y.A."/>
            <person name="Wolff E.C."/>
            <person name="Dimitriadis E.K."/>
            <person name="Park M.H."/>
        </authorList>
    </citation>
    <scope>PROTEIN SEQUENCE OF 2-6</scope>
    <scope>INTERACTION WITH DHPS</scope>
</reference>
<reference key="10">
    <citation type="submission" date="2009-03" db="UniProtKB">
        <authorList>
            <person name="Bienvenut W.V."/>
            <person name="Waridel P."/>
            <person name="Quadroni M."/>
        </authorList>
    </citation>
    <scope>PROTEIN SEQUENCE OF 2-26; 56-67; 69-85 AND 110-121</scope>
    <scope>CLEAVAGE OF INITIATOR METHIONINE</scope>
    <scope>ACETYLATION AT ALA-2</scope>
    <scope>IDENTIFICATION BY MASS SPECTROMETRY</scope>
    <source>
        <tissue>Cervix carcinoma</tissue>
    </source>
</reference>
<reference key="11">
    <citation type="journal article" date="1986" name="J. Biol. Chem.">
        <title>Eukaryotic initiation factor 4D. Purification from human red blood cells and the sequence of amino acids around its single hypusine residue.</title>
        <authorList>
            <person name="Park M.H."/>
            <person name="Liu T.-Y."/>
            <person name="Neece S.H."/>
            <person name="Swiggard W.J."/>
        </authorList>
    </citation>
    <scope>PROTEIN SEQUENCE OF 48-55</scope>
    <scope>HYPUSINE AT LYS-50</scope>
</reference>
<reference key="12">
    <citation type="submission" date="2008-12" db="UniProtKB">
        <authorList>
            <person name="Lubec G."/>
            <person name="Afjehi-Sadat L."/>
            <person name="Chen W.-Q."/>
            <person name="Sun Y."/>
        </authorList>
    </citation>
    <scope>PROTEIN SEQUENCE OF 56-121</scope>
    <scope>IDENTIFICATION BY MASS SPECTROMETRY</scope>
    <source>
        <tissue>Brain</tissue>
        <tissue>Cajal-Retzius cell</tissue>
        <tissue>Fetal brain cortex</tissue>
    </source>
</reference>
<reference key="13">
    <citation type="journal article" date="1992" name="Electrophoresis">
        <title>Microsequences of 145 proteins recorded in the two-dimensional gel protein database of normal human epidermal keratinocytes.</title>
        <authorList>
            <person name="Rasmussen H.H."/>
            <person name="van Damme J."/>
            <person name="Puype M."/>
            <person name="Gesser B."/>
            <person name="Celis J.E."/>
            <person name="Vandekerckhove J."/>
        </authorList>
    </citation>
    <scope>PROTEIN SEQUENCE OF 68-84 AND 114-121</scope>
</reference>
<reference key="14">
    <citation type="journal article" date="1996" name="Exp. Cell Res.">
        <title>The subcellular distribution of eukaryotic translation initiation factor, eIF-5A, in cultured cells.</title>
        <authorList>
            <person name="Shi X.-P."/>
            <person name="Yin K.-C."/>
            <person name="Zimolo Z.A."/>
            <person name="Stern A.M."/>
            <person name="Waxman L."/>
        </authorList>
    </citation>
    <scope>SUBCELLULAR LOCATION</scope>
</reference>
<reference key="15">
    <citation type="journal article" date="2000" name="EMBO J.">
        <title>Exportin 4: a mediator of a novel nuclear export pathway in higher eukaryotes.</title>
        <authorList>
            <person name="Lipowsky G."/>
            <person name="Bischoff F.R."/>
            <person name="Schwarzmaier P."/>
            <person name="Kraft R."/>
            <person name="Kostka S."/>
            <person name="Hartmann E."/>
            <person name="Kutay U."/>
            <person name="Goerlich D."/>
        </authorList>
    </citation>
    <scope>IDENTIFICATION IN A COMPLEX WITH RAN AND XPO4</scope>
    <scope>SUBCELLULAR LOCATION</scope>
</reference>
<reference key="16">
    <citation type="journal article" date="2004" name="Biochem. J.">
        <title>Identification of mRNA that binds to eukaryotic initiation factor 5A by affinity co-purification and differential display.</title>
        <authorList>
            <person name="Xu A."/>
            <person name="Jao D.L."/>
            <person name="Chen K.Y."/>
        </authorList>
    </citation>
    <scope>MRNA-BINDING</scope>
</reference>
<reference key="17">
    <citation type="journal article" date="2004" name="Gynecol. Oncol.">
        <title>Eukaryotic initiation factor 5A-1 (eIF5A-1) as a diagnostic marker for aberrant proliferation in intraepithelial neoplasia of the vulva.</title>
        <authorList>
            <person name="Cracchiolo B.M."/>
            <person name="Heller D.S."/>
            <person name="Clement P.M.J."/>
            <person name="Wolff E.C."/>
            <person name="Park M.H."/>
            <person name="Hanauske-Abel H.M."/>
        </authorList>
    </citation>
    <scope>BIOTECHNOLOGY</scope>
</reference>
<reference key="18">
    <citation type="journal article" date="2004" name="J. Biol. Chem.">
        <title>A novel eIF5A complex functions as a regulator of p53 and p53-dependent apoptosis.</title>
        <authorList>
            <person name="Li A.-L."/>
            <person name="Li H.-Y."/>
            <person name="Jin B.-F."/>
            <person name="Ye Q.-N."/>
            <person name="Zhou T."/>
            <person name="Yu X.-D."/>
            <person name="Pan X."/>
            <person name="Man J.-H."/>
            <person name="He K."/>
            <person name="Yu M."/>
            <person name="Hu M.-R."/>
            <person name="Wang J."/>
            <person name="Yang S.-C."/>
            <person name="Shen B.-F."/>
            <person name="Zhang X.-M."/>
        </authorList>
    </citation>
    <scope>FUNCTION</scope>
    <scope>INTERACTION WITH SDCBP</scope>
</reference>
<reference key="19">
    <citation type="journal article" date="2004" name="Invest. Ophthalmol. Vis. Sci.">
        <title>Role of eIF5A in TNF-alpha-mediated apoptosis of lamina cribrosa cells.</title>
        <authorList>
            <person name="Taylor C.A."/>
            <person name="Senchyna M."/>
            <person name="Flanagan J."/>
            <person name="Joyce E.M."/>
            <person name="Cliche D.O."/>
            <person name="Boone A.N."/>
            <person name="Culp-Stewart S."/>
            <person name="Thompson J.E."/>
        </authorList>
    </citation>
    <scope>FUNCTION</scope>
</reference>
<reference key="20">
    <citation type="journal article" date="2006" name="FEBS J.">
        <title>Differential expression of eIF5A-1 and eIF5A-2 in human cancer cells.</title>
        <authorList>
            <person name="Clement P.M.J."/>
            <person name="Johansson H.E."/>
            <person name="Wolff E.C."/>
            <person name="Park M.H."/>
        </authorList>
    </citation>
    <scope>TISSUE SPECIFICITY</scope>
</reference>
<reference key="21">
    <citation type="journal article" date="2006" name="J. Biol. Chem.">
        <title>Temperature-sensitive eIF5A mutant accumulates transcripts targeted to the nonsense-mediated decay pathway.</title>
        <authorList>
            <person name="Schrader R."/>
            <person name="Young C."/>
            <person name="Kozian D."/>
            <person name="Hoffmann R."/>
            <person name="Lottspeich F."/>
        </authorList>
    </citation>
    <scope>FUNCTION</scope>
    <scope>MUTAGENESIS OF VAL-81</scope>
</reference>
<reference key="22">
    <citation type="journal article" date="2007" name="Exp. Cell Res.">
        <title>Eukaryotic translation initiation factor 5A induces apoptosis in colon cancer cells and associates with the nucleus in response to tumour necrosis factor alpha signalling.</title>
        <authorList>
            <person name="Taylor C.A."/>
            <person name="Sun Z."/>
            <person name="Cliche D.O."/>
            <person name="Ming H."/>
            <person name="Eshaque B."/>
            <person name="Jin S."/>
            <person name="Hopkins M.T."/>
            <person name="Thai B."/>
            <person name="Thompson J.E."/>
        </authorList>
    </citation>
    <scope>SUBCELLULAR LOCATION</scope>
    <scope>FUNCTION</scope>
    <scope>MUTAGENESIS OF LYS-50</scope>
</reference>
<reference key="23">
    <citation type="journal article" date="2007" name="J. Biol. Chem.">
        <title>Specificity of the deoxyhypusine hydroxylase-eukaryotic translation initiation factor (eIF5A) interaction: identification of amino acid residues of the enzyme required for binding of its substrate, deoxyhypusine-containing eIF5A.</title>
        <authorList>
            <person name="Kang K.R."/>
            <person name="Kim Y.S."/>
            <person name="Wolff E.C."/>
            <person name="Park M.H."/>
        </authorList>
    </citation>
    <scope>INTERACTION WITH DOHH</scope>
</reference>
<reference key="24">
    <citation type="journal article" date="2007" name="Proc. Natl. Acad. Sci. U.S.A.">
        <title>Neuronal growth and survival mediated by eIF5A, a polyamine-modified translation initiation factor.</title>
        <authorList>
            <person name="Huang Y."/>
            <person name="Higginson D.S."/>
            <person name="Hester L."/>
            <person name="Park M.H."/>
            <person name="Snyder S.H."/>
        </authorList>
    </citation>
    <scope>FUNCTION</scope>
</reference>
<reference key="25">
    <citation type="journal article" date="2008" name="FEBS J.">
        <title>Mutational analyses of human eIF5A-1: identification of amino acid residues critical for eIF5A activity and hypusine modification.</title>
        <authorList>
            <person name="Cano V.S.P."/>
            <person name="Jeon G.A."/>
            <person name="Johansson H.E."/>
            <person name="Henderson C.A."/>
            <person name="Park J.-H."/>
            <person name="Valentini S.R."/>
            <person name="Hershey J.W.B."/>
            <person name="Park M.H."/>
        </authorList>
    </citation>
    <scope>MUTAGENESIS OF LYS-47; GLY-49; LYS-50; GLY-52 AND LYS-55</scope>
</reference>
<reference key="26">
    <citation type="journal article" date="2009" name="Biochem. Biophys. Res. Commun.">
        <title>The effect of hypusine modification on the intracellular localization of eIF5A.</title>
        <authorList>
            <person name="Lee S.B."/>
            <person name="Park J.-H."/>
            <person name="Kaevel J."/>
            <person name="Sramkova M."/>
            <person name="Weigert R."/>
            <person name="Park M.H."/>
        </authorList>
    </citation>
    <scope>ACETYLATION AT LYS-47</scope>
    <scope>SUBCELLULAR LOCATION</scope>
    <scope>MUTAGENESIS OF LYS-47 AND LYS-50</scope>
</reference>
<reference key="27">
    <citation type="journal article" date="2011" name="BMC Syst. Biol.">
        <title>Initial characterization of the human central proteome.</title>
        <authorList>
            <person name="Burkard T.R."/>
            <person name="Planyavsky M."/>
            <person name="Kaupe I."/>
            <person name="Breitwieser F.P."/>
            <person name="Buerckstuemmer T."/>
            <person name="Bennett K.L."/>
            <person name="Superti-Furga G."/>
            <person name="Colinge J."/>
        </authorList>
    </citation>
    <scope>IDENTIFICATION BY MASS SPECTROMETRY [LARGE SCALE ANALYSIS]</scope>
</reference>
<reference key="28">
    <citation type="journal article" date="2012" name="FEBS Lett.">
        <title>Acetylation regulates subcellular localization of eukaryotic translation initiation factor 5A (eIF5A).</title>
        <authorList>
            <person name="Ishfaq M."/>
            <person name="Maeta K."/>
            <person name="Maeda S."/>
            <person name="Natsume T."/>
            <person name="Ito A."/>
            <person name="Yoshida M."/>
        </authorList>
    </citation>
    <scope>ACETYLATION</scope>
    <scope>DEACETYLATION BY SIRT2</scope>
</reference>
<reference key="29">
    <citation type="journal article" date="2014" name="J. Proteomics">
        <title>An enzyme assisted RP-RPLC approach for in-depth analysis of human liver phosphoproteome.</title>
        <authorList>
            <person name="Bian Y."/>
            <person name="Song C."/>
            <person name="Cheng K."/>
            <person name="Dong M."/>
            <person name="Wang F."/>
            <person name="Huang J."/>
            <person name="Sun D."/>
            <person name="Wang L."/>
            <person name="Ye M."/>
            <person name="Zou H."/>
        </authorList>
    </citation>
    <scope>IDENTIFICATION BY MASS SPECTROMETRY [LARGE SCALE ANALYSIS]</scope>
    <source>
        <tissue>Liver</tissue>
    </source>
</reference>
<reference key="30">
    <citation type="journal article" date="2015" name="Proteomics">
        <title>N-terminome analysis of the human mitochondrial proteome.</title>
        <authorList>
            <person name="Vaca Jacome A.S."/>
            <person name="Rabilloud T."/>
            <person name="Schaeffer-Reiss C."/>
            <person name="Rompais M."/>
            <person name="Ayoub D."/>
            <person name="Lane L."/>
            <person name="Bairoch A."/>
            <person name="Van Dorsselaer A."/>
            <person name="Carapito C."/>
        </authorList>
    </citation>
    <scope>IDENTIFICATION BY MASS SPECTROMETRY [LARGE SCALE ANALYSIS]</scope>
</reference>
<reference key="31">
    <citation type="journal article" date="2016" name="PLoS ONE">
        <title>Evidence for a negative cooperativity between eIF5A and eEF2 on binding to the ribosome.</title>
        <authorList>
            <person name="Rossi D."/>
            <person name="Barbosa N.M."/>
            <person name="Galvao F.C."/>
            <person name="Boldrin P.E."/>
            <person name="Hershey J.W."/>
            <person name="Zanelli C.F."/>
            <person name="Fraser C.S."/>
            <person name="Valentini S.R."/>
        </authorList>
    </citation>
    <scope>RIBOSOME-BINDING</scope>
</reference>
<reference key="32">
    <citation type="journal article" date="2018" name="EMBO Rep.">
        <title>eIF5A is required for autophagy by mediating ATG3 translation.</title>
        <authorList>
            <person name="Lubas M."/>
            <person name="Harder L.M."/>
            <person name="Kumsta C."/>
            <person name="Tiessen I."/>
            <person name="Hansen M."/>
            <person name="Andersen J.S."/>
            <person name="Lund A.H."/>
            <person name="Frankel L.B."/>
        </authorList>
    </citation>
    <scope>FUNCTION</scope>
</reference>
<reference key="33">
    <citation type="journal article" date="2001" name="Protein Eng.">
        <title>Homology modelling of the human eukaryotic initiation factor 5A (eIF-5A).</title>
        <authorList>
            <person name="Facchiano A.M."/>
            <person name="Stiuso P."/>
            <person name="Chiusano M.L."/>
            <person name="Caraglia M."/>
            <person name="Giuberti G."/>
            <person name="Marra M."/>
            <person name="Abbruzzese A."/>
            <person name="Colonna G."/>
        </authorList>
    </citation>
    <scope>3D-STRUCTURE MODELING</scope>
</reference>
<reference evidence="29" key="34">
    <citation type="journal article" date="2009" name="Proteins">
        <title>Crystal structure of human eIF5A1: insight into functional similarity of human eIF5A1 and eIF5A2.</title>
        <authorList>
            <person name="Tong Y."/>
            <person name="Park I."/>
            <person name="Hong B.S."/>
            <person name="Nedyalkova L."/>
            <person name="Tempel W."/>
            <person name="Park H.W."/>
        </authorList>
    </citation>
    <scope>X-RAY CRYSTALLOGRAPHY (2.50 ANGSTROMS) OF 15-151</scope>
</reference>
<reference evidence="30" key="35">
    <citation type="journal article" date="2016" name="Nat. Commun.">
        <title>Structure of the exportin Xpo4 in complex with RanGTP and the hypusine-containing translation factor eIF5A.</title>
        <authorList>
            <person name="Aksu M."/>
            <person name="Trakhanov S."/>
            <person name="Goerlich D."/>
        </authorList>
    </citation>
    <scope>X-RAY CRYSTALLOGRAPHY (3.20 ANGSTROMS) OF 15-154 IN COMPLEX WITH XPO4 AND RAN</scope>
    <scope>SUBCELLULAR LOCATION</scope>
    <scope>HYPUSINE AT LYS-50</scope>
</reference>
<reference key="36">
    <citation type="journal article" date="2021" name="Nat. Commun.">
        <title>Impaired eIF5A function causes a Mendelian disorder that is partially rescued in model systems by spermidine.</title>
        <authorList>
            <person name="Faundes V."/>
            <person name="Jennings M.D."/>
            <person name="Crilly S."/>
            <person name="Legraie S."/>
            <person name="Withers S.E."/>
            <person name="Cuvertino S."/>
            <person name="Davies S.J."/>
            <person name="Douglas A.G.L."/>
            <person name="Fry A.E."/>
            <person name="Harrison V."/>
            <person name="Amiel J."/>
            <person name="Lehalle D."/>
            <person name="Newman W.G."/>
            <person name="Newkirk P."/>
            <person name="Ranells J."/>
            <person name="Splitt M."/>
            <person name="Cross L.A."/>
            <person name="Saunders C.J."/>
            <person name="Sullivan B.R."/>
            <person name="Granadillo J.L."/>
            <person name="Gordon C.T."/>
            <person name="Kasher P.R."/>
            <person name="Pavitt G.D."/>
            <person name="Banka S."/>
        </authorList>
    </citation>
    <scope>INVOLVEMENT IN FABAS</scope>
    <scope>VARIANTS FABAS ASN-48; ARG-106; 109-ARG--LYS-154 DEL; GLY-109; SER-115 AND LYS-122</scope>
    <scope>CHARACTERIZATION OF VARIANTS FABAS ASN-48; ARG-106 AND ARG-106</scope>
    <scope>FUNCTION</scope>
</reference>
<proteinExistence type="evidence at protein level"/>
<organism>
    <name type="scientific">Homo sapiens</name>
    <name type="common">Human</name>
    <dbReference type="NCBI Taxonomy" id="9606"/>
    <lineage>
        <taxon>Eukaryota</taxon>
        <taxon>Metazoa</taxon>
        <taxon>Chordata</taxon>
        <taxon>Craniata</taxon>
        <taxon>Vertebrata</taxon>
        <taxon>Euteleostomi</taxon>
        <taxon>Mammalia</taxon>
        <taxon>Eutheria</taxon>
        <taxon>Euarchontoglires</taxon>
        <taxon>Primates</taxon>
        <taxon>Haplorrhini</taxon>
        <taxon>Catarrhini</taxon>
        <taxon>Hominidae</taxon>
        <taxon>Homo</taxon>
    </lineage>
</organism>
<evidence type="ECO:0000250" key="1">
    <source>
        <dbReference type="UniProtKB" id="P23301"/>
    </source>
</evidence>
<evidence type="ECO:0000250" key="2">
    <source>
        <dbReference type="UniProtKB" id="P63242"/>
    </source>
</evidence>
<evidence type="ECO:0000250" key="3">
    <source>
        <dbReference type="UniProtKB" id="Q6NX89"/>
    </source>
</evidence>
<evidence type="ECO:0000269" key="4">
    <source>
    </source>
</evidence>
<evidence type="ECO:0000269" key="5">
    <source>
    </source>
</evidence>
<evidence type="ECO:0000269" key="6">
    <source>
    </source>
</evidence>
<evidence type="ECO:0000269" key="7">
    <source>
    </source>
</evidence>
<evidence type="ECO:0000269" key="8">
    <source>
    </source>
</evidence>
<evidence type="ECO:0000269" key="9">
    <source>
    </source>
</evidence>
<evidence type="ECO:0000269" key="10">
    <source>
    </source>
</evidence>
<evidence type="ECO:0000269" key="11">
    <source>
    </source>
</evidence>
<evidence type="ECO:0000269" key="12">
    <source>
    </source>
</evidence>
<evidence type="ECO:0000269" key="13">
    <source>
    </source>
</evidence>
<evidence type="ECO:0000269" key="14">
    <source>
    </source>
</evidence>
<evidence type="ECO:0000269" key="15">
    <source>
    </source>
</evidence>
<evidence type="ECO:0000269" key="16">
    <source>
    </source>
</evidence>
<evidence type="ECO:0000269" key="17">
    <source>
    </source>
</evidence>
<evidence type="ECO:0000269" key="18">
    <source>
    </source>
</evidence>
<evidence type="ECO:0000269" key="19">
    <source>
    </source>
</evidence>
<evidence type="ECO:0000269" key="20">
    <source>
    </source>
</evidence>
<evidence type="ECO:0000269" key="21">
    <source>
    </source>
</evidence>
<evidence type="ECO:0000269" key="22">
    <source>
    </source>
</evidence>
<evidence type="ECO:0000269" key="23">
    <source>
    </source>
</evidence>
<evidence type="ECO:0000269" key="24">
    <source>
    </source>
</evidence>
<evidence type="ECO:0000269" key="25">
    <source ref="10"/>
</evidence>
<evidence type="ECO:0000303" key="26">
    <source ref="5"/>
</evidence>
<evidence type="ECO:0000305" key="27"/>
<evidence type="ECO:0000312" key="28">
    <source>
        <dbReference type="HGNC" id="HGNC:3300"/>
    </source>
</evidence>
<evidence type="ECO:0007744" key="29">
    <source>
        <dbReference type="PDB" id="3CPF"/>
    </source>
</evidence>
<evidence type="ECO:0007744" key="30">
    <source>
        <dbReference type="PDB" id="5DLQ"/>
    </source>
</evidence>
<evidence type="ECO:0007829" key="31">
    <source>
        <dbReference type="PDB" id="3CPF"/>
    </source>
</evidence>
<feature type="initiator methionine" description="Removed" evidence="4 25">
    <location>
        <position position="1"/>
    </location>
</feature>
<feature type="chain" id="PRO_0000142451" description="Eukaryotic translation initiation factor 5A-1">
    <location>
        <begin position="2"/>
        <end position="154"/>
    </location>
</feature>
<feature type="region of interest" description="Interaction with DOHH" evidence="12">
    <location>
        <begin position="20"/>
        <end position="90"/>
    </location>
</feature>
<feature type="modified residue" description="N-acetylalanine" evidence="25">
    <location>
        <position position="2"/>
    </location>
</feature>
<feature type="modified residue" description="N6-acetyllysine" evidence="15">
    <location>
        <position position="47"/>
    </location>
</feature>
<feature type="modified residue" description="Hypusine" evidence="19 21">
    <location>
        <position position="50"/>
    </location>
</feature>
<feature type="modified residue" description="N6-acetyllysine" evidence="2">
    <location>
        <position position="121"/>
    </location>
</feature>
<feature type="splice variant" id="VSP_022020" description="In isoform 2." evidence="26">
    <original>MA</original>
    <variation>MCGTGGTDSKTRRPPHRASFLKRLESKPLKMA</variation>
    <location>
        <begin position="1"/>
        <end position="2"/>
    </location>
</feature>
<feature type="sequence variant" id="VAR_085973" description="In FABAS; in yeast, exhibits reduced ribosome binding, reduced levels of hypusination and transfected cells show impaired synthesis of proteins containing poly-proline tracts." evidence="22">
    <original>T</original>
    <variation>N</variation>
    <location>
        <position position="48"/>
    </location>
</feature>
<feature type="sequence variant" id="VAR_085974" description="In FABAS; in yeast, exhibits reduced ribosome binding and cells show impaired synthesis of proteins containing poly-proline tracts." evidence="22">
    <original>G</original>
    <variation>R</variation>
    <location>
        <position position="106"/>
    </location>
</feature>
<feature type="sequence variant" id="VAR_085975" description="In FABAS." evidence="22">
    <location>
        <begin position="109"/>
        <end position="154"/>
    </location>
</feature>
<feature type="sequence variant" id="VAR_085976" description="In FABAS." evidence="22">
    <original>R</original>
    <variation>G</variation>
    <location>
        <position position="109"/>
    </location>
</feature>
<feature type="sequence variant" id="VAR_085977" description="In FABAS." evidence="22">
    <original>P</original>
    <variation>S</variation>
    <location>
        <position position="115"/>
    </location>
</feature>
<feature type="sequence variant" id="VAR_085978" description="In FABAS; in yeast, exhibits reduced ribosome binding and cells show impaired synthesis of proteins containing poly-proline tracts." evidence="22">
    <original>E</original>
    <variation>K</variation>
    <location>
        <position position="122"/>
    </location>
</feature>
<feature type="mutagenesis site" description="Abolishes acetylation." evidence="14 15">
    <original>K</original>
    <variation>A</variation>
    <variation>R</variation>
    <location>
        <position position="47"/>
    </location>
</feature>
<feature type="mutagenesis site" description="Causes total inactivation of eIF5A in supporting yeast growth." evidence="14 15">
    <original>K</original>
    <variation>D</variation>
    <location>
        <position position="47"/>
    </location>
</feature>
<feature type="mutagenesis site" description="Causes total inactivation of eIF5A in supporting yeast growth." evidence="14">
    <original>G</original>
    <variation>A</variation>
    <location>
        <position position="49"/>
    </location>
</feature>
<feature type="mutagenesis site" description="Decreases significantly the acetylation at position K-47 and causes total inactivation of eIF5A in supporting yeast growth." evidence="11 14 15">
    <original>K</original>
    <variation>A</variation>
    <location>
        <position position="50"/>
    </location>
</feature>
<feature type="mutagenesis site" description="Causes total inactivation of eIF5A in supporting yeast growth." evidence="11 14 15">
    <original>K</original>
    <variation>I</variation>
    <variation>D</variation>
    <variation>R</variation>
    <location>
        <position position="50"/>
    </location>
</feature>
<feature type="mutagenesis site" description="Causes total inactivation of eIF5A in supporting yeast growth." evidence="14">
    <original>G</original>
    <variation>A</variation>
    <location>
        <position position="52"/>
    </location>
</feature>
<feature type="mutagenesis site" description="Causes total inactivation of eIF5A in supporting yeast growth." evidence="14">
    <original>K</original>
    <variation>A</variation>
    <location>
        <position position="55"/>
    </location>
</feature>
<feature type="mutagenesis site" description="Leads to temperature sensitivity when expressed in yeast cells." evidence="10">
    <original>V</original>
    <variation>G</variation>
    <location>
        <position position="81"/>
    </location>
</feature>
<feature type="sequence conflict" description="In Ref. 3; AAD14095." evidence="27" ref="3">
    <original>R</original>
    <variation>W</variation>
    <location>
        <position position="36"/>
    </location>
</feature>
<feature type="sequence conflict" description="In Ref. 3; AAD14095." evidence="27" ref="3">
    <original>T</original>
    <variation>A</variation>
    <location>
        <position position="45"/>
    </location>
</feature>
<feature type="sequence conflict" description="In Ref. 3; AAD14095." evidence="27" ref="3">
    <original>K</original>
    <variation>R</variation>
    <location>
        <position position="85"/>
    </location>
</feature>
<feature type="sequence conflict" description="In Ref. 3; AAD14095." evidence="27" ref="3">
    <original>R</original>
    <variation>P</variation>
    <location>
        <position position="109"/>
    </location>
</feature>
<feature type="strand" evidence="31">
    <location>
        <begin position="17"/>
        <end position="21"/>
    </location>
</feature>
<feature type="helix" evidence="31">
    <location>
        <begin position="22"/>
        <end position="24"/>
    </location>
</feature>
<feature type="strand" evidence="31">
    <location>
        <begin position="29"/>
        <end position="33"/>
    </location>
</feature>
<feature type="strand" evidence="31">
    <location>
        <begin position="36"/>
        <end position="46"/>
    </location>
</feature>
<feature type="strand" evidence="31">
    <location>
        <begin position="55"/>
        <end position="62"/>
    </location>
</feature>
<feature type="turn" evidence="31">
    <location>
        <begin position="63"/>
        <end position="65"/>
    </location>
</feature>
<feature type="strand" evidence="31">
    <location>
        <begin position="68"/>
        <end position="74"/>
    </location>
</feature>
<feature type="strand" evidence="31">
    <location>
        <begin position="77"/>
        <end position="82"/>
    </location>
</feature>
<feature type="strand" evidence="31">
    <location>
        <begin position="85"/>
        <end position="95"/>
    </location>
</feature>
<feature type="strand" evidence="31">
    <location>
        <begin position="98"/>
        <end position="102"/>
    </location>
</feature>
<feature type="helix" evidence="31">
    <location>
        <begin position="117"/>
        <end position="129"/>
    </location>
</feature>
<feature type="strand" evidence="31">
    <location>
        <begin position="134"/>
        <end position="140"/>
    </location>
</feature>
<feature type="strand" evidence="31">
    <location>
        <begin position="143"/>
        <end position="150"/>
    </location>
</feature>
<comment type="function">
    <text evidence="1 7 8 10 11 13 20 22">Translation factor that promotes translation elongation and termination, particularly upon ribosome stalling at specific amino acid sequence contexts (PubMed:33547280). Binds between the exit (E) and peptidyl (P) site of the ribosome and promotes rescue of stalled ribosome: specifically required for efficient translation of polyproline-containing peptides as well as other motifs that stall the ribosome (By similarity). Acts as a ribosome quality control (RQC) cofactor by joining the RQC complex to facilitate peptidyl transfer during CAT tailing step (By similarity). Also involved in actin dynamics and cell cycle progression, mRNA decay and probably in a pathway involved in stress response and maintenance of cell wall integrity (PubMed:16987817). With syntenin SDCBP, functions as a regulator of p53/TP53 and p53/TP53-dependent apoptosis (PubMed:15371445). Also regulates TNF-alpha-mediated apoptosis (PubMed:15452064, PubMed:17187778). Mediates effects of polyamines on neuronal process extension and survival (PubMed:17360499). Is required for autophagy by assisting the ribosome in translating the ATG3 protein at a specific amino acid sequence, the 'ASP-ASP-Gly' motif, leading to the increase of the efficiency of ATG3 translation and facilitation of LC3B lipidation and autophagosome formation (PubMed:29712776).</text>
</comment>
<comment type="function">
    <text evidence="23">(Microbial infection) Cellular cofactor of human T-cell leukemia virus type I (HTLV-1) Rex protein and of human immunodeficiency virus type 1 (HIV-1) Rev protein, essential for mRNA export of retroviral transcripts.</text>
</comment>
<comment type="subunit">
    <text evidence="3 4 7 12 18">Binds to 80S ribosomes (PubMed:27115996). Actively translating ribosomes show mutually exclusive binding of eIF5a (EIF5A or EIF5A2) and EEF2/eEF2 (PubMed:27115996). Interacts with DAPL1; interaction takes place at the polypeptide exit tunnel of hibernating ribosomes and prevents translation (By similarity). Interacts with DHPS (PubMed:10229683). Interacts with SDCBP (PubMed:15371445). Interacts with DOHH (PubMed:17213197).</text>
</comment>
<comment type="subunit">
    <text evidence="23">(Microbial infection) Interacts with HIV-1 protein Rev.</text>
</comment>
<comment type="interaction">
    <interactant intactId="EBI-373150">
        <id>P63241</id>
    </interactant>
    <interactant intactId="EBI-748171">
        <id>O43186</id>
        <label>CRX</label>
    </interactant>
    <organismsDiffer>false</organismsDiffer>
    <experiments>3</experiments>
</comment>
<comment type="interaction">
    <interactant intactId="EBI-373150">
        <id>P63241</id>
    </interactant>
    <interactant intactId="EBI-741925">
        <id>P49366</id>
        <label>DHPS</label>
    </interactant>
    <organismsDiffer>false</organismsDiffer>
    <experiments>6</experiments>
</comment>
<comment type="interaction">
    <interactant intactId="EBI-373150">
        <id>P63241</id>
    </interactant>
    <interactant intactId="EBI-6164171">
        <id>Q9BU89</id>
        <label>DOHH</label>
    </interactant>
    <organismsDiffer>false</organismsDiffer>
    <experiments>2</experiments>
</comment>
<comment type="interaction">
    <interactant intactId="EBI-373150">
        <id>P63241</id>
    </interactant>
    <interactant intactId="EBI-19954058">
        <id>O15499</id>
        <label>GSC2</label>
    </interactant>
    <organismsDiffer>false</organismsDiffer>
    <experiments>3</experiments>
</comment>
<comment type="interaction">
    <interactant intactId="EBI-373150">
        <id>P63241</id>
    </interactant>
    <interactant intactId="EBI-20141748">
        <id>P52954</id>
        <label>LBX1</label>
    </interactant>
    <organismsDiffer>false</organismsDiffer>
    <experiments>3</experiments>
</comment>
<comment type="interaction">
    <interactant intactId="EBI-373150">
        <id>P63241</id>
    </interactant>
    <interactant intactId="EBI-19944212">
        <id>A8MW99</id>
        <label>MEI4</label>
    </interactant>
    <organismsDiffer>false</organismsDiffer>
    <experiments>3</experiments>
</comment>
<comment type="interaction">
    <interactant intactId="EBI-373150">
        <id>P63241</id>
    </interactant>
    <interactant intactId="EBI-748397">
        <id>P50222</id>
        <label>MEOX2</label>
    </interactant>
    <organismsDiffer>false</organismsDiffer>
    <experiments>3</experiments>
</comment>
<comment type="interaction">
    <interactant intactId="EBI-373150">
        <id>P63241</id>
    </interactant>
    <interactant intactId="EBI-16439278">
        <id>Q6FHY5</id>
        <label>MEOX2</label>
    </interactant>
    <organismsDiffer>false</organismsDiffer>
    <experiments>3</experiments>
</comment>
<comment type="interaction">
    <interactant intactId="EBI-373150">
        <id>P63241</id>
    </interactant>
    <interactant intactId="EBI-79165">
        <id>Q9NRD5</id>
        <label>PICK1</label>
    </interactant>
    <organismsDiffer>false</organismsDiffer>
    <experiments>3</experiments>
</comment>
<comment type="interaction">
    <interactant intactId="EBI-373150">
        <id>P63241</id>
    </interactant>
    <interactant intactId="EBI-307352">
        <id>Q04864</id>
        <label>REL</label>
    </interactant>
    <organismsDiffer>false</organismsDiffer>
    <experiments>3</experiments>
</comment>
<comment type="interaction">
    <interactant intactId="EBI-373150">
        <id>P63241</id>
    </interactant>
    <interactant intactId="EBI-10829018">
        <id>Q04864-2</id>
        <label>REL</label>
    </interactant>
    <organismsDiffer>false</organismsDiffer>
    <experiments>3</experiments>
</comment>
<comment type="interaction">
    <interactant intactId="EBI-373150">
        <id>P63241</id>
    </interactant>
    <interactant intactId="EBI-727004">
        <id>O00560</id>
        <label>SDCBP</label>
    </interactant>
    <organismsDiffer>false</organismsDiffer>
    <experiments>3</experiments>
</comment>
<comment type="subcellular location">
    <subcellularLocation>
        <location evidence="5 11 15 19 24">Cytoplasm</location>
    </subcellularLocation>
    <subcellularLocation>
        <location evidence="5 11 15 19 23">Nucleus</location>
    </subcellularLocation>
    <subcellularLocation>
        <location evidence="24">Endoplasmic reticulum membrane</location>
        <topology evidence="24">Peripheral membrane protein</topology>
        <orientation evidence="24">Cytoplasmic side</orientation>
    </subcellularLocation>
    <text evidence="5 15 19">Hypusine modification promotes the nuclear export and cytoplasmic localization and there was a dynamic shift in the localization from predominantly cytoplasmic to primarily nuclear under apoptotic inducing conditions (PubMed:19379712, PubMed:27306458). Nuclear export of hypusinated protein is mediated by XPO4 (PubMed:10944119, PubMed:27306458).</text>
</comment>
<comment type="alternative products">
    <event type="alternative splicing"/>
    <isoform>
        <id>P63241-1</id>
        <name>1</name>
        <name>B</name>
        <name>C</name>
        <name>D</name>
        <sequence type="displayed"/>
    </isoform>
    <isoform>
        <id>P63241-2</id>
        <name>2</name>
        <name>A</name>
        <sequence type="described" ref="VSP_022020"/>
    </isoform>
</comment>
<comment type="tissue specificity">
    <text evidence="9">Expressed in umbilical vein endothelial cells and several cancer cell lines (at protein level).</text>
</comment>
<comment type="PTM">
    <text evidence="15 16">Acetylated by PCAF/KAT2B, regulating its subcellular localization (PubMed:19379712, PubMed:22771473). Deacetylated by SIRT2 (PubMed:22771473).</text>
</comment>
<comment type="PTM">
    <text evidence="4 12 14 17 19 21">Lys-50 undergoes hypusination, a unique post-translational modification that consists in the addition of a butylamino group from spermidine to lysine side chain, leading to the formation of the unusual amino acid hypusine. eIF-5As are the only known proteins to undergo this modification, which is essential for their function.</text>
</comment>
<comment type="disease" evidence="22">
    <disease id="DI-06142">
        <name>Faundes-Banka syndrome</name>
        <acronym>FABAS</acronym>
        <description>An autosomal dominant disorder characterized by variable combinations of developmental delay, microcephaly, micrognathia and dysmorphic features.</description>
        <dbReference type="MIM" id="619376"/>
    </disease>
    <text>The disease is caused by variants affecting the gene represented in this entry.</text>
</comment>
<comment type="biotechnology">
    <text evidence="6">Mature eIF5A-1 may be used as an in situ diagnostic marker for aberrant proliferation in intraepithelial neoplasia of the vulva.</text>
</comment>
<comment type="similarity">
    <text evidence="27">Belongs to the eIF-5A family.</text>
</comment>
<protein>
    <recommendedName>
        <fullName evidence="27">Eukaryotic translation initiation factor 5A-1</fullName>
        <shortName>eIF-5A-1</shortName>
        <shortName>eIF-5A1</shortName>
    </recommendedName>
    <alternativeName>
        <fullName>Eukaryotic initiation factor 5A isoform 1</fullName>
        <shortName>eIF-5A</shortName>
    </alternativeName>
    <alternativeName>
        <fullName>Rev-binding factor</fullName>
    </alternativeName>
    <alternativeName>
        <fullName>eIF-4D</fullName>
    </alternativeName>
</protein>
<sequence length="154" mass="16832">MADDLDFETGDAGASATFPMQCSALRKNGFVVLKGRPCKIVEMSTSKTGKHGHAKVHLVGIDIFTGKKYEDICPSTHNMDVPNIKRNDFQLIGIQDGYLSLLQDSGEVREDLRLPEGDLGKEIEQKYDCGEEILITVLSAMTEEAAVAIKAMAK</sequence>